<protein>
    <recommendedName>
        <fullName evidence="1">2-phytyl-1,4-naphtoquinone methyltransferase</fullName>
        <ecNumber evidence="1">2.1.1.329</ecNumber>
    </recommendedName>
    <alternativeName>
        <fullName evidence="1">Demethylphylloquinone methyltransferase</fullName>
    </alternativeName>
</protein>
<evidence type="ECO:0000255" key="1">
    <source>
        <dbReference type="HAMAP-Rule" id="MF_01982"/>
    </source>
</evidence>
<dbReference type="EC" id="2.1.1.329" evidence="1"/>
<dbReference type="EMBL" id="AP008231">
    <property type="protein sequence ID" value="BAD78640.1"/>
    <property type="molecule type" value="Genomic_DNA"/>
</dbReference>
<dbReference type="SMR" id="Q5N4X9"/>
<dbReference type="KEGG" id="syc:syc0450_d"/>
<dbReference type="eggNOG" id="COG2226">
    <property type="taxonomic scope" value="Bacteria"/>
</dbReference>
<dbReference type="UniPathway" id="UPA00995"/>
<dbReference type="Proteomes" id="UP000001175">
    <property type="component" value="Chromosome"/>
</dbReference>
<dbReference type="GO" id="GO:0052624">
    <property type="term" value="F:2-phytyl-1,4-naphthoquinone methyltransferase activity"/>
    <property type="evidence" value="ECO:0007669"/>
    <property type="project" value="UniProtKB-EC"/>
</dbReference>
<dbReference type="GO" id="GO:0032259">
    <property type="term" value="P:methylation"/>
    <property type="evidence" value="ECO:0007669"/>
    <property type="project" value="UniProtKB-KW"/>
</dbReference>
<dbReference type="GO" id="GO:0042372">
    <property type="term" value="P:phylloquinone biosynthetic process"/>
    <property type="evidence" value="ECO:0007669"/>
    <property type="project" value="UniProtKB-UniRule"/>
</dbReference>
<dbReference type="CDD" id="cd02440">
    <property type="entry name" value="AdoMet_MTases"/>
    <property type="match status" value="1"/>
</dbReference>
<dbReference type="Gene3D" id="3.40.50.150">
    <property type="entry name" value="Vaccinia Virus protein VP39"/>
    <property type="match status" value="1"/>
</dbReference>
<dbReference type="HAMAP" id="MF_01982">
    <property type="entry name" value="MenG_phylloquinone_subfam"/>
    <property type="match status" value="1"/>
</dbReference>
<dbReference type="HAMAP" id="MF_01813">
    <property type="entry name" value="MenG_UbiE_methyltr"/>
    <property type="match status" value="1"/>
</dbReference>
<dbReference type="InterPro" id="IPR032904">
    <property type="entry name" value="MenG"/>
</dbReference>
<dbReference type="InterPro" id="IPR029063">
    <property type="entry name" value="SAM-dependent_MTases_sf"/>
</dbReference>
<dbReference type="InterPro" id="IPR004033">
    <property type="entry name" value="UbiE/COQ5_MeTrFase"/>
</dbReference>
<dbReference type="InterPro" id="IPR023576">
    <property type="entry name" value="UbiE/COQ5_MeTrFase_CS"/>
</dbReference>
<dbReference type="NCBIfam" id="TIGR01934">
    <property type="entry name" value="MenG_MenH_UbiE"/>
    <property type="match status" value="1"/>
</dbReference>
<dbReference type="NCBIfam" id="NF001244">
    <property type="entry name" value="PRK00216.1-5"/>
    <property type="match status" value="1"/>
</dbReference>
<dbReference type="PANTHER" id="PTHR43591:SF24">
    <property type="entry name" value="2-METHOXY-6-POLYPRENYL-1,4-BENZOQUINOL METHYLASE, MITOCHONDRIAL"/>
    <property type="match status" value="1"/>
</dbReference>
<dbReference type="PANTHER" id="PTHR43591">
    <property type="entry name" value="METHYLTRANSFERASE"/>
    <property type="match status" value="1"/>
</dbReference>
<dbReference type="Pfam" id="PF01209">
    <property type="entry name" value="Ubie_methyltran"/>
    <property type="match status" value="1"/>
</dbReference>
<dbReference type="SUPFAM" id="SSF53335">
    <property type="entry name" value="S-adenosyl-L-methionine-dependent methyltransferases"/>
    <property type="match status" value="1"/>
</dbReference>
<dbReference type="PROSITE" id="PS51608">
    <property type="entry name" value="SAM_MT_UBIE"/>
    <property type="match status" value="1"/>
</dbReference>
<dbReference type="PROSITE" id="PS01183">
    <property type="entry name" value="UBIE_1"/>
    <property type="match status" value="1"/>
</dbReference>
<feature type="chain" id="PRO_0000193341" description="2-phytyl-1,4-naphtoquinone methyltransferase">
    <location>
        <begin position="1"/>
        <end position="233"/>
    </location>
</feature>
<keyword id="KW-0489">Methyltransferase</keyword>
<keyword id="KW-0949">S-adenosyl-L-methionine</keyword>
<keyword id="KW-0808">Transferase</keyword>
<sequence length="233" mass="25441">MSVLAPDAVEGLFDQIAPIYDNLNDQLSFGLHRLWKRMAVKWSAAKPGDRVLDLCCGSGDLAFLLAKVVGSKGQVIGFDRSQALLSVAGDRARQLASALVIDWQRGDALDLPFPDDHFDAATLGYGLRNVPDIPTVLRQLQRVLKPGARAAILDMHRPYSPLLRQFQQVYLDRWVVPAAAAQNCAAEYEYIDASLEAFPQGQQQVALAIAAGFQRAKHYELAAGLMGVLVVEA</sequence>
<reference key="1">
    <citation type="journal article" date="2007" name="Photosyn. Res.">
        <title>Complete nucleotide sequence of the freshwater unicellular cyanobacterium Synechococcus elongatus PCC 6301 chromosome: gene content and organization.</title>
        <authorList>
            <person name="Sugita C."/>
            <person name="Ogata K."/>
            <person name="Shikata M."/>
            <person name="Jikuya H."/>
            <person name="Takano J."/>
            <person name="Furumichi M."/>
            <person name="Kanehisa M."/>
            <person name="Omata T."/>
            <person name="Sugiura M."/>
            <person name="Sugita M."/>
        </authorList>
    </citation>
    <scope>NUCLEOTIDE SEQUENCE [LARGE SCALE GENOMIC DNA]</scope>
    <source>
        <strain>ATCC 27144 / PCC 6301 / SAUG 1402/1</strain>
    </source>
</reference>
<comment type="function">
    <text evidence="1">Methyltransferase required for the conversion of 2-phytyl-1,4-beta-naphthoquinol to phylloquinol.</text>
</comment>
<comment type="catalytic activity">
    <reaction evidence="1">
        <text>demethylphylloquinol + S-adenosyl-L-methionine = phylloquinol + S-adenosyl-L-homocysteine + H(+)</text>
        <dbReference type="Rhea" id="RHEA:40551"/>
        <dbReference type="ChEBI" id="CHEBI:15378"/>
        <dbReference type="ChEBI" id="CHEBI:28433"/>
        <dbReference type="ChEBI" id="CHEBI:57856"/>
        <dbReference type="ChEBI" id="CHEBI:59789"/>
        <dbReference type="ChEBI" id="CHEBI:87844"/>
        <dbReference type="EC" id="2.1.1.329"/>
    </reaction>
</comment>
<comment type="pathway">
    <text evidence="1">Cofactor biosynthesis; phylloquinone biosynthesis.</text>
</comment>
<comment type="similarity">
    <text evidence="1">Belongs to the class I-like SAM-binding methyltransferase superfamily. MenG/UbiE family.</text>
</comment>
<accession>Q5N4X9</accession>
<name>MENG_SYNP6</name>
<gene>
    <name evidence="1" type="primary">menG</name>
    <name type="ordered locus">syc0450_d</name>
</gene>
<organism>
    <name type="scientific">Synechococcus sp. (strain ATCC 27144 / PCC 6301 / SAUG 1402/1)</name>
    <name type="common">Anacystis nidulans</name>
    <dbReference type="NCBI Taxonomy" id="269084"/>
    <lineage>
        <taxon>Bacteria</taxon>
        <taxon>Bacillati</taxon>
        <taxon>Cyanobacteriota</taxon>
        <taxon>Cyanophyceae</taxon>
        <taxon>Synechococcales</taxon>
        <taxon>Synechococcaceae</taxon>
        <taxon>Synechococcus</taxon>
    </lineage>
</organism>
<proteinExistence type="inferred from homology"/>